<proteinExistence type="inferred from homology"/>
<keyword id="KW-0547">Nucleotide-binding</keyword>
<gene>
    <name type="ordered locus">LIC_10764</name>
</gene>
<name>Y764_LEPIC</name>
<feature type="chain" id="PRO_0000106186" description="Nucleotide-binding protein LIC_10764">
    <location>
        <begin position="1"/>
        <end position="163"/>
    </location>
</feature>
<reference key="1">
    <citation type="journal article" date="2004" name="J. Bacteriol.">
        <title>Comparative genomics of two Leptospira interrogans serovars reveals novel insights into physiology and pathogenesis.</title>
        <authorList>
            <person name="Nascimento A.L.T.O."/>
            <person name="Ko A.I."/>
            <person name="Martins E.A.L."/>
            <person name="Monteiro-Vitorello C.B."/>
            <person name="Ho P.L."/>
            <person name="Haake D.A."/>
            <person name="Verjovski-Almeida S."/>
            <person name="Hartskeerl R.A."/>
            <person name="Marques M.V."/>
            <person name="Oliveira M.C."/>
            <person name="Menck C.F.M."/>
            <person name="Leite L.C.C."/>
            <person name="Carrer H."/>
            <person name="Coutinho L.L."/>
            <person name="Degrave W.M."/>
            <person name="Dellagostin O.A."/>
            <person name="El-Dorry H."/>
            <person name="Ferro E.S."/>
            <person name="Ferro M.I.T."/>
            <person name="Furlan L.R."/>
            <person name="Gamberini M."/>
            <person name="Giglioti E.A."/>
            <person name="Goes-Neto A."/>
            <person name="Goldman G.H."/>
            <person name="Goldman M.H.S."/>
            <person name="Harakava R."/>
            <person name="Jeronimo S.M.B."/>
            <person name="Junqueira-de-Azevedo I.L.M."/>
            <person name="Kimura E.T."/>
            <person name="Kuramae E.E."/>
            <person name="Lemos E.G.M."/>
            <person name="Lemos M.V.F."/>
            <person name="Marino C.L."/>
            <person name="Nunes L.R."/>
            <person name="de Oliveira R.C."/>
            <person name="Pereira G.G."/>
            <person name="Reis M.S."/>
            <person name="Schriefer A."/>
            <person name="Siqueira W.J."/>
            <person name="Sommer P."/>
            <person name="Tsai S.M."/>
            <person name="Simpson A.J.G."/>
            <person name="Ferro J.A."/>
            <person name="Camargo L.E.A."/>
            <person name="Kitajima J.P."/>
            <person name="Setubal J.C."/>
            <person name="Van Sluys M.A."/>
        </authorList>
    </citation>
    <scope>NUCLEOTIDE SEQUENCE [LARGE SCALE GENOMIC DNA]</scope>
    <source>
        <strain>Fiocruz L1-130</strain>
    </source>
</reference>
<comment type="function">
    <text evidence="1">Nucleotide-binding protein.</text>
</comment>
<comment type="similarity">
    <text evidence="1">Belongs to the YajQ family.</text>
</comment>
<sequence length="163" mass="18364">MSDPSFDVVSEISRPELTNAVTQALGEIKNRFDFKGSKSDIQLEDEQLVLTSDNEAKLESVIDVLVSKMAKRGLGLKNFDFKSKIEPATGGTVRMKVKIRKGMEKEQTKEVTRIVKESKLKVNATIMGECVRITGKKKDDLQEVIHLLKNSDLPFDVQFTNYK</sequence>
<protein>
    <recommendedName>
        <fullName evidence="1">Nucleotide-binding protein LIC_10764</fullName>
    </recommendedName>
</protein>
<accession>Q72U97</accession>
<organism>
    <name type="scientific">Leptospira interrogans serogroup Icterohaemorrhagiae serovar copenhageni (strain Fiocruz L1-130)</name>
    <dbReference type="NCBI Taxonomy" id="267671"/>
    <lineage>
        <taxon>Bacteria</taxon>
        <taxon>Pseudomonadati</taxon>
        <taxon>Spirochaetota</taxon>
        <taxon>Spirochaetia</taxon>
        <taxon>Leptospirales</taxon>
        <taxon>Leptospiraceae</taxon>
        <taxon>Leptospira</taxon>
    </lineage>
</organism>
<dbReference type="EMBL" id="AE016823">
    <property type="protein sequence ID" value="AAS69381.1"/>
    <property type="molecule type" value="Genomic_DNA"/>
</dbReference>
<dbReference type="RefSeq" id="WP_001283275.1">
    <property type="nucleotide sequence ID" value="NC_005823.1"/>
</dbReference>
<dbReference type="SMR" id="Q72U97"/>
<dbReference type="KEGG" id="lic:LIC_10764"/>
<dbReference type="HOGENOM" id="CLU_099839_1_0_12"/>
<dbReference type="Proteomes" id="UP000007037">
    <property type="component" value="Chromosome I"/>
</dbReference>
<dbReference type="GO" id="GO:0005829">
    <property type="term" value="C:cytosol"/>
    <property type="evidence" value="ECO:0007669"/>
    <property type="project" value="TreeGrafter"/>
</dbReference>
<dbReference type="GO" id="GO:0000166">
    <property type="term" value="F:nucleotide binding"/>
    <property type="evidence" value="ECO:0007669"/>
    <property type="project" value="TreeGrafter"/>
</dbReference>
<dbReference type="CDD" id="cd11740">
    <property type="entry name" value="YajQ_like"/>
    <property type="match status" value="1"/>
</dbReference>
<dbReference type="FunFam" id="3.30.70.990:FF:000002">
    <property type="entry name" value="UPF0234 protein LEP1GSC067_4943"/>
    <property type="match status" value="1"/>
</dbReference>
<dbReference type="Gene3D" id="3.30.70.860">
    <property type="match status" value="1"/>
</dbReference>
<dbReference type="Gene3D" id="3.30.70.990">
    <property type="entry name" value="YajQ-like, domain 2"/>
    <property type="match status" value="1"/>
</dbReference>
<dbReference type="HAMAP" id="MF_00632">
    <property type="entry name" value="YajQ"/>
    <property type="match status" value="1"/>
</dbReference>
<dbReference type="InterPro" id="IPR007551">
    <property type="entry name" value="DUF520"/>
</dbReference>
<dbReference type="InterPro" id="IPR035571">
    <property type="entry name" value="UPF0234-like_C"/>
</dbReference>
<dbReference type="InterPro" id="IPR035570">
    <property type="entry name" value="UPF0234_N"/>
</dbReference>
<dbReference type="InterPro" id="IPR036183">
    <property type="entry name" value="YajQ-like_sf"/>
</dbReference>
<dbReference type="NCBIfam" id="NF003819">
    <property type="entry name" value="PRK05412.1"/>
    <property type="match status" value="1"/>
</dbReference>
<dbReference type="PANTHER" id="PTHR30476">
    <property type="entry name" value="UPF0234 PROTEIN YAJQ"/>
    <property type="match status" value="1"/>
</dbReference>
<dbReference type="PANTHER" id="PTHR30476:SF0">
    <property type="entry name" value="UPF0234 PROTEIN YAJQ"/>
    <property type="match status" value="1"/>
</dbReference>
<dbReference type="Pfam" id="PF04461">
    <property type="entry name" value="DUF520"/>
    <property type="match status" value="1"/>
</dbReference>
<dbReference type="SUPFAM" id="SSF89963">
    <property type="entry name" value="YajQ-like"/>
    <property type="match status" value="2"/>
</dbReference>
<evidence type="ECO:0000255" key="1">
    <source>
        <dbReference type="HAMAP-Rule" id="MF_00632"/>
    </source>
</evidence>